<evidence type="ECO:0000255" key="1">
    <source>
        <dbReference type="HAMAP-Rule" id="MF_00709"/>
    </source>
</evidence>
<organism>
    <name type="scientific">Escherichia coli O45:K1 (strain S88 / ExPEC)</name>
    <dbReference type="NCBI Taxonomy" id="585035"/>
    <lineage>
        <taxon>Bacteria</taxon>
        <taxon>Pseudomonadati</taxon>
        <taxon>Pseudomonadota</taxon>
        <taxon>Gammaproteobacteria</taxon>
        <taxon>Enterobacterales</taxon>
        <taxon>Enterobacteriaceae</taxon>
        <taxon>Escherichia</taxon>
    </lineage>
</organism>
<protein>
    <recommendedName>
        <fullName evidence="1">Fumarate reductase subunit D</fullName>
    </recommendedName>
    <alternativeName>
        <fullName evidence="1">Fumarate reductase 13 kDa hydrophobic protein</fullName>
    </alternativeName>
    <alternativeName>
        <fullName evidence="1">Quinol-fumarate reductase subunit D</fullName>
        <shortName evidence="1">QFR subunit D</shortName>
    </alternativeName>
</protein>
<reference key="1">
    <citation type="journal article" date="2009" name="PLoS Genet.">
        <title>Organised genome dynamics in the Escherichia coli species results in highly diverse adaptive paths.</title>
        <authorList>
            <person name="Touchon M."/>
            <person name="Hoede C."/>
            <person name="Tenaillon O."/>
            <person name="Barbe V."/>
            <person name="Baeriswyl S."/>
            <person name="Bidet P."/>
            <person name="Bingen E."/>
            <person name="Bonacorsi S."/>
            <person name="Bouchier C."/>
            <person name="Bouvet O."/>
            <person name="Calteau A."/>
            <person name="Chiapello H."/>
            <person name="Clermont O."/>
            <person name="Cruveiller S."/>
            <person name="Danchin A."/>
            <person name="Diard M."/>
            <person name="Dossat C."/>
            <person name="Karoui M.E."/>
            <person name="Frapy E."/>
            <person name="Garry L."/>
            <person name="Ghigo J.M."/>
            <person name="Gilles A.M."/>
            <person name="Johnson J."/>
            <person name="Le Bouguenec C."/>
            <person name="Lescat M."/>
            <person name="Mangenot S."/>
            <person name="Martinez-Jehanne V."/>
            <person name="Matic I."/>
            <person name="Nassif X."/>
            <person name="Oztas S."/>
            <person name="Petit M.A."/>
            <person name="Pichon C."/>
            <person name="Rouy Z."/>
            <person name="Ruf C.S."/>
            <person name="Schneider D."/>
            <person name="Tourret J."/>
            <person name="Vacherie B."/>
            <person name="Vallenet D."/>
            <person name="Medigue C."/>
            <person name="Rocha E.P.C."/>
            <person name="Denamur E."/>
        </authorList>
    </citation>
    <scope>NUCLEOTIDE SEQUENCE [LARGE SCALE GENOMIC DNA]</scope>
    <source>
        <strain>S88 / ExPEC</strain>
    </source>
</reference>
<dbReference type="EMBL" id="CU928161">
    <property type="protein sequence ID" value="CAR05889.1"/>
    <property type="molecule type" value="Genomic_DNA"/>
</dbReference>
<dbReference type="RefSeq" id="WP_000609663.1">
    <property type="nucleotide sequence ID" value="NC_011742.1"/>
</dbReference>
<dbReference type="SMR" id="B7MKV8"/>
<dbReference type="GeneID" id="75169672"/>
<dbReference type="KEGG" id="ecz:ECS88_4739"/>
<dbReference type="HOGENOM" id="CLU_168367_0_0_6"/>
<dbReference type="Proteomes" id="UP000000747">
    <property type="component" value="Chromosome"/>
</dbReference>
<dbReference type="GO" id="GO:0045283">
    <property type="term" value="C:fumarate reductase complex"/>
    <property type="evidence" value="ECO:0007669"/>
    <property type="project" value="UniProtKB-UniRule"/>
</dbReference>
<dbReference type="GO" id="GO:0005886">
    <property type="term" value="C:plasma membrane"/>
    <property type="evidence" value="ECO:0007669"/>
    <property type="project" value="UniProtKB-SubCell"/>
</dbReference>
<dbReference type="GO" id="GO:0000104">
    <property type="term" value="F:succinate dehydrogenase activity"/>
    <property type="evidence" value="ECO:0007669"/>
    <property type="project" value="UniProtKB-UniRule"/>
</dbReference>
<dbReference type="GO" id="GO:0006106">
    <property type="term" value="P:fumarate metabolic process"/>
    <property type="evidence" value="ECO:0007669"/>
    <property type="project" value="InterPro"/>
</dbReference>
<dbReference type="CDD" id="cd00547">
    <property type="entry name" value="QFR_TypeD_subunitD"/>
    <property type="match status" value="1"/>
</dbReference>
<dbReference type="FunFam" id="1.20.1300.10:FF:000002">
    <property type="entry name" value="Fumarate reductase subunit D"/>
    <property type="match status" value="1"/>
</dbReference>
<dbReference type="Gene3D" id="1.20.1300.10">
    <property type="entry name" value="Fumarate reductase/succinate dehydrogenase, transmembrane subunit"/>
    <property type="match status" value="1"/>
</dbReference>
<dbReference type="HAMAP" id="MF_00709">
    <property type="entry name" value="Fumarate_red_D"/>
    <property type="match status" value="1"/>
</dbReference>
<dbReference type="InterPro" id="IPR003418">
    <property type="entry name" value="Fumarate_red_D"/>
</dbReference>
<dbReference type="InterPro" id="IPR034804">
    <property type="entry name" value="SQR/QFR_C/D"/>
</dbReference>
<dbReference type="NCBIfam" id="NF003977">
    <property type="entry name" value="PRK05470.1-1"/>
    <property type="match status" value="1"/>
</dbReference>
<dbReference type="Pfam" id="PF02313">
    <property type="entry name" value="Fumarate_red_D"/>
    <property type="match status" value="1"/>
</dbReference>
<dbReference type="PIRSF" id="PIRSF000179">
    <property type="entry name" value="FrdD"/>
    <property type="match status" value="1"/>
</dbReference>
<dbReference type="SUPFAM" id="SSF81343">
    <property type="entry name" value="Fumarate reductase respiratory complex transmembrane subunits"/>
    <property type="match status" value="1"/>
</dbReference>
<proteinExistence type="inferred from homology"/>
<keyword id="KW-0997">Cell inner membrane</keyword>
<keyword id="KW-1003">Cell membrane</keyword>
<keyword id="KW-0472">Membrane</keyword>
<keyword id="KW-1185">Reference proteome</keyword>
<keyword id="KW-0812">Transmembrane</keyword>
<keyword id="KW-1133">Transmembrane helix</keyword>
<gene>
    <name evidence="1" type="primary">frdD</name>
    <name type="ordered locus">ECS88_4739</name>
</gene>
<sequence>MINPNPKRSDEPVFWGLFGAGGMWSAIIAPVMILLVGILLPLGLFPGDALSYERVLAFAQSFIGRVFLFLMIVLPLWCGLHRMHHAMHDLKIHVPAGKWVFYGLAAILTVVTLIGVVTI</sequence>
<name>FRDD_ECO45</name>
<feature type="chain" id="PRO_1000132396" description="Fumarate reductase subunit D">
    <location>
        <begin position="1"/>
        <end position="119"/>
    </location>
</feature>
<feature type="transmembrane region" description="Helical" evidence="1">
    <location>
        <begin position="26"/>
        <end position="46"/>
    </location>
</feature>
<feature type="transmembrane region" description="Helical" evidence="1">
    <location>
        <begin position="55"/>
        <end position="75"/>
    </location>
</feature>
<feature type="transmembrane region" description="Helical" evidence="1">
    <location>
        <begin position="99"/>
        <end position="119"/>
    </location>
</feature>
<accession>B7MKV8</accession>
<comment type="function">
    <text evidence="1">Two distinct, membrane-bound, FAD-containing enzymes are responsible for the catalysis of fumarate and succinate interconversion; fumarate reductase is used in anaerobic growth, and succinate dehydrogenase is used in aerobic growth. Anchors the catalytic components of the fumarate reductase complex to the cell inner membrane, binds quinones.</text>
</comment>
<comment type="subunit">
    <text evidence="1">Part of an enzyme complex containing four subunits: a flavoprotein (FrdA), an iron-sulfur protein (FrdB), and two hydrophobic anchor proteins (FrdC and FrdD).</text>
</comment>
<comment type="subcellular location">
    <subcellularLocation>
        <location evidence="1">Cell inner membrane</location>
        <topology evidence="1">Multi-pass membrane protein</topology>
    </subcellularLocation>
</comment>
<comment type="similarity">
    <text evidence="1">Belongs to the FrdD family.</text>
</comment>